<accession>Q57554</accession>
<evidence type="ECO:0000255" key="1">
    <source>
        <dbReference type="PROSITE-ProRule" id="PRU00434"/>
    </source>
</evidence>
<evidence type="ECO:0000305" key="2"/>
<proteinExistence type="inferred from homology"/>
<dbReference type="EMBL" id="L77117">
    <property type="protein sequence ID" value="AAB98070.1"/>
    <property type="molecule type" value="Genomic_DNA"/>
</dbReference>
<dbReference type="PIR" id="A64311">
    <property type="entry name" value="A64311"/>
</dbReference>
<dbReference type="SMR" id="Q57554"/>
<dbReference type="FunCoup" id="Q57554">
    <property type="interactions" value="21"/>
</dbReference>
<dbReference type="STRING" id="243232.MJ_0089"/>
<dbReference type="PaxDb" id="243232-MJ_0089"/>
<dbReference type="EnsemblBacteria" id="AAB98070">
    <property type="protein sequence ID" value="AAB98070"/>
    <property type="gene ID" value="MJ_0089"/>
</dbReference>
<dbReference type="KEGG" id="mja:MJ_0089"/>
<dbReference type="eggNOG" id="arCOG00198">
    <property type="taxonomic scope" value="Archaea"/>
</dbReference>
<dbReference type="HOGENOM" id="CLU_000604_1_11_2"/>
<dbReference type="InParanoid" id="Q57554"/>
<dbReference type="PhylomeDB" id="Q57554"/>
<dbReference type="Proteomes" id="UP000000805">
    <property type="component" value="Chromosome"/>
</dbReference>
<dbReference type="GO" id="GO:0043190">
    <property type="term" value="C:ATP-binding cassette (ABC) transporter complex"/>
    <property type="evidence" value="ECO:0000318"/>
    <property type="project" value="GO_Central"/>
</dbReference>
<dbReference type="GO" id="GO:0005524">
    <property type="term" value="F:ATP binding"/>
    <property type="evidence" value="ECO:0007669"/>
    <property type="project" value="UniProtKB-KW"/>
</dbReference>
<dbReference type="GO" id="GO:0016887">
    <property type="term" value="F:ATP hydrolysis activity"/>
    <property type="evidence" value="ECO:0007669"/>
    <property type="project" value="InterPro"/>
</dbReference>
<dbReference type="GO" id="GO:0042626">
    <property type="term" value="F:ATPase-coupled transmembrane transporter activity"/>
    <property type="evidence" value="ECO:0000318"/>
    <property type="project" value="GO_Central"/>
</dbReference>
<dbReference type="CDD" id="cd03214">
    <property type="entry name" value="ABC_Iron-Siderophores_B12_Hemin"/>
    <property type="match status" value="1"/>
</dbReference>
<dbReference type="FunFam" id="3.40.50.300:FF:000134">
    <property type="entry name" value="Iron-enterobactin ABC transporter ATP-binding protein"/>
    <property type="match status" value="1"/>
</dbReference>
<dbReference type="Gene3D" id="3.40.50.300">
    <property type="entry name" value="P-loop containing nucleotide triphosphate hydrolases"/>
    <property type="match status" value="1"/>
</dbReference>
<dbReference type="InterPro" id="IPR003593">
    <property type="entry name" value="AAA+_ATPase"/>
</dbReference>
<dbReference type="InterPro" id="IPR003439">
    <property type="entry name" value="ABC_transporter-like_ATP-bd"/>
</dbReference>
<dbReference type="InterPro" id="IPR017871">
    <property type="entry name" value="ABC_transporter-like_CS"/>
</dbReference>
<dbReference type="InterPro" id="IPR050153">
    <property type="entry name" value="Metal_Ion_Import_ABC"/>
</dbReference>
<dbReference type="InterPro" id="IPR027417">
    <property type="entry name" value="P-loop_NTPase"/>
</dbReference>
<dbReference type="PANTHER" id="PTHR42734">
    <property type="entry name" value="METAL TRANSPORT SYSTEM ATP-BINDING PROTEIN TM_0124-RELATED"/>
    <property type="match status" value="1"/>
</dbReference>
<dbReference type="PANTHER" id="PTHR42734:SF6">
    <property type="entry name" value="MOLYBDATE IMPORT ATP-BINDING PROTEIN MOLC"/>
    <property type="match status" value="1"/>
</dbReference>
<dbReference type="Pfam" id="PF00005">
    <property type="entry name" value="ABC_tran"/>
    <property type="match status" value="1"/>
</dbReference>
<dbReference type="SMART" id="SM00382">
    <property type="entry name" value="AAA"/>
    <property type="match status" value="1"/>
</dbReference>
<dbReference type="SUPFAM" id="SSF52540">
    <property type="entry name" value="P-loop containing nucleoside triphosphate hydrolases"/>
    <property type="match status" value="1"/>
</dbReference>
<dbReference type="PROSITE" id="PS00211">
    <property type="entry name" value="ABC_TRANSPORTER_1"/>
    <property type="match status" value="1"/>
</dbReference>
<dbReference type="PROSITE" id="PS50893">
    <property type="entry name" value="ABC_TRANSPORTER_2"/>
    <property type="match status" value="1"/>
</dbReference>
<sequence>MSLMILSVDGVEFAYKSRQILNNIKFEVKRGEVVSILGVNGAGKSTLLKCINKILKPKRGTILIDNFDIKNLDNLELAKKVGYVPQRAEGNYMTVFDAVLLGRKPHIKWEVSDRDIEITHKVLKLLNLEDYALRYTNELSGGELQKVIIARALVQEPQILLLDEPTNNLDLKNQLEVMKIIMDISKSQNIASIVVMHDLNLALRYSDKFIMLKDGVIYAEGGREVINPENIKAVYGVDAYIENVRGIPVVVPIG</sequence>
<protein>
    <recommendedName>
        <fullName>Uncharacterized ABC transporter ATP-binding protein MJ0089</fullName>
    </recommendedName>
</protein>
<gene>
    <name type="ordered locus">MJ0089</name>
</gene>
<feature type="chain" id="PRO_0000093217" description="Uncharacterized ABC transporter ATP-binding protein MJ0089">
    <location>
        <begin position="1"/>
        <end position="254"/>
    </location>
</feature>
<feature type="domain" description="ABC transporter" evidence="1">
    <location>
        <begin position="6"/>
        <end position="239"/>
    </location>
</feature>
<feature type="binding site" evidence="1">
    <location>
        <begin position="38"/>
        <end position="45"/>
    </location>
    <ligand>
        <name>ATP</name>
        <dbReference type="ChEBI" id="CHEBI:30616"/>
    </ligand>
</feature>
<comment type="similarity">
    <text evidence="2">Belongs to the ABC transporter superfamily.</text>
</comment>
<keyword id="KW-0067">ATP-binding</keyword>
<keyword id="KW-0547">Nucleotide-binding</keyword>
<keyword id="KW-1185">Reference proteome</keyword>
<keyword id="KW-0813">Transport</keyword>
<organism>
    <name type="scientific">Methanocaldococcus jannaschii (strain ATCC 43067 / DSM 2661 / JAL-1 / JCM 10045 / NBRC 100440)</name>
    <name type="common">Methanococcus jannaschii</name>
    <dbReference type="NCBI Taxonomy" id="243232"/>
    <lineage>
        <taxon>Archaea</taxon>
        <taxon>Methanobacteriati</taxon>
        <taxon>Methanobacteriota</taxon>
        <taxon>Methanomada group</taxon>
        <taxon>Methanococci</taxon>
        <taxon>Methanococcales</taxon>
        <taxon>Methanocaldococcaceae</taxon>
        <taxon>Methanocaldococcus</taxon>
    </lineage>
</organism>
<name>Y089_METJA</name>
<reference key="1">
    <citation type="journal article" date="1996" name="Science">
        <title>Complete genome sequence of the methanogenic archaeon, Methanococcus jannaschii.</title>
        <authorList>
            <person name="Bult C.J."/>
            <person name="White O."/>
            <person name="Olsen G.J."/>
            <person name="Zhou L."/>
            <person name="Fleischmann R.D."/>
            <person name="Sutton G.G."/>
            <person name="Blake J.A."/>
            <person name="FitzGerald L.M."/>
            <person name="Clayton R.A."/>
            <person name="Gocayne J.D."/>
            <person name="Kerlavage A.R."/>
            <person name="Dougherty B.A."/>
            <person name="Tomb J.-F."/>
            <person name="Adams M.D."/>
            <person name="Reich C.I."/>
            <person name="Overbeek R."/>
            <person name="Kirkness E.F."/>
            <person name="Weinstock K.G."/>
            <person name="Merrick J.M."/>
            <person name="Glodek A."/>
            <person name="Scott J.L."/>
            <person name="Geoghagen N.S.M."/>
            <person name="Weidman J.F."/>
            <person name="Fuhrmann J.L."/>
            <person name="Nguyen D."/>
            <person name="Utterback T.R."/>
            <person name="Kelley J.M."/>
            <person name="Peterson J.D."/>
            <person name="Sadow P.W."/>
            <person name="Hanna M.C."/>
            <person name="Cotton M.D."/>
            <person name="Roberts K.M."/>
            <person name="Hurst M.A."/>
            <person name="Kaine B.P."/>
            <person name="Borodovsky M."/>
            <person name="Klenk H.-P."/>
            <person name="Fraser C.M."/>
            <person name="Smith H.O."/>
            <person name="Woese C.R."/>
            <person name="Venter J.C."/>
        </authorList>
    </citation>
    <scope>NUCLEOTIDE SEQUENCE [LARGE SCALE GENOMIC DNA]</scope>
    <source>
        <strain>ATCC 43067 / DSM 2661 / JAL-1 / JCM 10045 / NBRC 100440</strain>
    </source>
</reference>